<sequence length="379" mass="42374">MEGGSSSSNGTSYLLAFGENNSGGLCPMTMMPLVTSHHAGHHPINPSNNNNVNTNCLFIPNCSNSTGTPSIMLHNNHNNNKTDDDDNNNNTGLGYYFMESDHHHHHHGNNNNNGSSSSSSSSAVKAKIMAHPHYHRLLAAYVNCQKVGAPPEVVARLEEACASAATMAGGDAAAGSSCIGEDPALDQFMEAYCEMLTKYEQELSKPLKEAMLFLQRIECQFKNLTISSSDFASNEGGDRNGSSEEDVDLHNMIDPQAEDRDLKGQLLRKYSGYLGSLKQEFMKKRKKGKLPKEARQQLLEWWNRHYKWPYPSESQKLALAESTGLDQKQINNWFINQRKRHWKPSEDMQFVVMDPSHPHYYMDNVLGNPFPMDLSHPML</sequence>
<evidence type="ECO:0000255" key="1">
    <source>
        <dbReference type="PROSITE-ProRule" id="PRU00108"/>
    </source>
</evidence>
<evidence type="ECO:0000255" key="2">
    <source>
        <dbReference type="PROSITE-ProRule" id="PRU00559"/>
    </source>
</evidence>
<evidence type="ECO:0000256" key="3">
    <source>
        <dbReference type="SAM" id="MobiDB-lite"/>
    </source>
</evidence>
<evidence type="ECO:0000305" key="4"/>
<protein>
    <recommendedName>
        <fullName>Homeobox protein SBH1</fullName>
    </recommendedName>
</protein>
<organism>
    <name type="scientific">Glycine max</name>
    <name type="common">Soybean</name>
    <name type="synonym">Glycine hispida</name>
    <dbReference type="NCBI Taxonomy" id="3847"/>
    <lineage>
        <taxon>Eukaryota</taxon>
        <taxon>Viridiplantae</taxon>
        <taxon>Streptophyta</taxon>
        <taxon>Embryophyta</taxon>
        <taxon>Tracheophyta</taxon>
        <taxon>Spermatophyta</taxon>
        <taxon>Magnoliopsida</taxon>
        <taxon>eudicotyledons</taxon>
        <taxon>Gunneridae</taxon>
        <taxon>Pentapetalae</taxon>
        <taxon>rosids</taxon>
        <taxon>fabids</taxon>
        <taxon>Fabales</taxon>
        <taxon>Fabaceae</taxon>
        <taxon>Papilionoideae</taxon>
        <taxon>50 kb inversion clade</taxon>
        <taxon>NPAAA clade</taxon>
        <taxon>indigoferoid/millettioid clade</taxon>
        <taxon>Phaseoleae</taxon>
        <taxon>Glycine</taxon>
        <taxon>Glycine subgen. Soja</taxon>
    </lineage>
</organism>
<proteinExistence type="evidence at transcript level"/>
<comment type="function">
    <text>Possible transcription activator involved in early embryonic development. Probably binds to the DNA sequence 5'-TGAC-3'.</text>
</comment>
<comment type="subcellular location">
    <subcellularLocation>
        <location evidence="4">Nucleus</location>
    </subcellularLocation>
</comment>
<comment type="tissue specificity">
    <text>Expressed mainly in embryonic tissues. Weakly detected in stems and hypocotyl.</text>
</comment>
<comment type="developmental stage">
    <text>First expressed in the embryo proliferation stage, increases during early somatic embryo development and decreases thereafter.</text>
</comment>
<comment type="similarity">
    <text evidence="2">Belongs to the TALE/KNOX homeobox family.</text>
</comment>
<dbReference type="EMBL" id="L13663">
    <property type="protein sequence ID" value="AAA20882.1"/>
    <property type="molecule type" value="mRNA"/>
</dbReference>
<dbReference type="PIR" id="S42543">
    <property type="entry name" value="S42543"/>
</dbReference>
<dbReference type="RefSeq" id="NP_001238058.1">
    <property type="nucleotide sequence ID" value="NM_001251129.1"/>
</dbReference>
<dbReference type="SMR" id="P46608"/>
<dbReference type="FunCoup" id="P46608">
    <property type="interactions" value="388"/>
</dbReference>
<dbReference type="STRING" id="3847.P46608"/>
<dbReference type="PaxDb" id="3847-GLYMA09G01000.2"/>
<dbReference type="EnsemblPlants" id="KRH36506">
    <property type="protein sequence ID" value="KRH36506"/>
    <property type="gene ID" value="GLYMA_09G007500"/>
</dbReference>
<dbReference type="GeneID" id="547796"/>
<dbReference type="Gramene" id="KRH36506">
    <property type="protein sequence ID" value="KRH36506"/>
    <property type="gene ID" value="GLYMA_09G007500"/>
</dbReference>
<dbReference type="KEGG" id="gmx:547796"/>
<dbReference type="eggNOG" id="KOG0773">
    <property type="taxonomic scope" value="Eukaryota"/>
</dbReference>
<dbReference type="HOGENOM" id="CLU_040111_0_0_1"/>
<dbReference type="InParanoid" id="P46608"/>
<dbReference type="OMA" id="HHSNCGT"/>
<dbReference type="OrthoDB" id="10056939at2759"/>
<dbReference type="Proteomes" id="UP000008827">
    <property type="component" value="Chromosome 9"/>
</dbReference>
<dbReference type="GO" id="GO:0005634">
    <property type="term" value="C:nucleus"/>
    <property type="evidence" value="ECO:0000318"/>
    <property type="project" value="GO_Central"/>
</dbReference>
<dbReference type="GO" id="GO:0003677">
    <property type="term" value="F:DNA binding"/>
    <property type="evidence" value="ECO:0007669"/>
    <property type="project" value="UniProtKB-KW"/>
</dbReference>
<dbReference type="GO" id="GO:0000981">
    <property type="term" value="F:DNA-binding transcription factor activity, RNA polymerase II-specific"/>
    <property type="evidence" value="ECO:0007669"/>
    <property type="project" value="InterPro"/>
</dbReference>
<dbReference type="CDD" id="cd00086">
    <property type="entry name" value="homeodomain"/>
    <property type="match status" value="1"/>
</dbReference>
<dbReference type="FunFam" id="1.10.10.60:FF:000076">
    <property type="entry name" value="Homeobox protein knotted-1-like 2"/>
    <property type="match status" value="1"/>
</dbReference>
<dbReference type="Gene3D" id="1.10.10.60">
    <property type="entry name" value="Homeodomain-like"/>
    <property type="match status" value="1"/>
</dbReference>
<dbReference type="InterPro" id="IPR005539">
    <property type="entry name" value="ELK_dom"/>
</dbReference>
<dbReference type="InterPro" id="IPR001356">
    <property type="entry name" value="HD"/>
</dbReference>
<dbReference type="InterPro" id="IPR017970">
    <property type="entry name" value="Homeobox_CS"/>
</dbReference>
<dbReference type="InterPro" id="IPR009057">
    <property type="entry name" value="Homeodomain-like_sf"/>
</dbReference>
<dbReference type="InterPro" id="IPR008422">
    <property type="entry name" value="KN_HD"/>
</dbReference>
<dbReference type="InterPro" id="IPR005540">
    <property type="entry name" value="KNOX1"/>
</dbReference>
<dbReference type="InterPro" id="IPR005541">
    <property type="entry name" value="KNOX2"/>
</dbReference>
<dbReference type="InterPro" id="IPR050224">
    <property type="entry name" value="TALE_homeobox"/>
</dbReference>
<dbReference type="PANTHER" id="PTHR11850">
    <property type="entry name" value="HOMEOBOX PROTEIN TRANSCRIPTION FACTORS"/>
    <property type="match status" value="1"/>
</dbReference>
<dbReference type="Pfam" id="PF03789">
    <property type="entry name" value="ELK"/>
    <property type="match status" value="1"/>
</dbReference>
<dbReference type="Pfam" id="PF05920">
    <property type="entry name" value="Homeobox_KN"/>
    <property type="match status" value="1"/>
</dbReference>
<dbReference type="Pfam" id="PF03790">
    <property type="entry name" value="KNOX1"/>
    <property type="match status" value="1"/>
</dbReference>
<dbReference type="Pfam" id="PF03791">
    <property type="entry name" value="KNOX2"/>
    <property type="match status" value="1"/>
</dbReference>
<dbReference type="SMART" id="SM01188">
    <property type="entry name" value="ELK"/>
    <property type="match status" value="1"/>
</dbReference>
<dbReference type="SMART" id="SM00389">
    <property type="entry name" value="HOX"/>
    <property type="match status" value="1"/>
</dbReference>
<dbReference type="SMART" id="SM01255">
    <property type="entry name" value="KNOX1"/>
    <property type="match status" value="1"/>
</dbReference>
<dbReference type="SMART" id="SM01256">
    <property type="entry name" value="KNOX2"/>
    <property type="match status" value="1"/>
</dbReference>
<dbReference type="SUPFAM" id="SSF46689">
    <property type="entry name" value="Homeodomain-like"/>
    <property type="match status" value="1"/>
</dbReference>
<dbReference type="PROSITE" id="PS51213">
    <property type="entry name" value="ELK"/>
    <property type="match status" value="1"/>
</dbReference>
<dbReference type="PROSITE" id="PS00027">
    <property type="entry name" value="HOMEOBOX_1"/>
    <property type="match status" value="1"/>
</dbReference>
<dbReference type="PROSITE" id="PS50071">
    <property type="entry name" value="HOMEOBOX_2"/>
    <property type="match status" value="1"/>
</dbReference>
<reference key="1">
    <citation type="journal article" date="1994" name="Plant Mol. Biol.">
        <title>Identification of a homeobox-containing gene with enhanced expression during soybean (Glycine max L.) somatic embryo development.</title>
        <authorList>
            <person name="Ma H."/>
            <person name="McMullen M.D."/>
            <person name="Finer J.J."/>
        </authorList>
    </citation>
    <scope>NUCLEOTIDE SEQUENCE [MRNA]</scope>
    <source>
        <tissue>Somatic embryo</tissue>
    </source>
</reference>
<name>HSBH1_SOYBN</name>
<gene>
    <name type="primary">H1</name>
</gene>
<accession>P46608</accession>
<keyword id="KW-0010">Activator</keyword>
<keyword id="KW-0238">DNA-binding</keyword>
<keyword id="KW-0371">Homeobox</keyword>
<keyword id="KW-0539">Nucleus</keyword>
<keyword id="KW-1185">Reference proteome</keyword>
<keyword id="KW-0804">Transcription</keyword>
<keyword id="KW-0805">Transcription regulation</keyword>
<feature type="chain" id="PRO_0000049009" description="Homeobox protein SBH1">
    <location>
        <begin position="1"/>
        <end position="379"/>
    </location>
</feature>
<feature type="domain" description="ELK" evidence="2">
    <location>
        <begin position="261"/>
        <end position="281"/>
    </location>
</feature>
<feature type="DNA-binding region" description="Homeobox; TALE-type" evidence="1">
    <location>
        <begin position="282"/>
        <end position="345"/>
    </location>
</feature>
<feature type="region of interest" description="Disordered" evidence="3">
    <location>
        <begin position="75"/>
        <end position="125"/>
    </location>
</feature>
<feature type="compositionally biased region" description="Low complexity" evidence="3">
    <location>
        <begin position="109"/>
        <end position="122"/>
    </location>
</feature>